<dbReference type="EC" id="1.1.1.25" evidence="1"/>
<dbReference type="EMBL" id="CP001400">
    <property type="protein sequence ID" value="ACP38541.1"/>
    <property type="molecule type" value="Genomic_DNA"/>
</dbReference>
<dbReference type="RefSeq" id="WP_012711771.1">
    <property type="nucleotide sequence ID" value="NC_012588.1"/>
</dbReference>
<dbReference type="SMR" id="C3MXK7"/>
<dbReference type="KEGG" id="sia:M1425_1796"/>
<dbReference type="HOGENOM" id="CLU_044063_3_1_2"/>
<dbReference type="UniPathway" id="UPA00053">
    <property type="reaction ID" value="UER00087"/>
</dbReference>
<dbReference type="Proteomes" id="UP000001350">
    <property type="component" value="Chromosome"/>
</dbReference>
<dbReference type="GO" id="GO:0004764">
    <property type="term" value="F:shikimate 3-dehydrogenase (NADP+) activity"/>
    <property type="evidence" value="ECO:0007669"/>
    <property type="project" value="UniProtKB-UniRule"/>
</dbReference>
<dbReference type="GO" id="GO:0008652">
    <property type="term" value="P:amino acid biosynthetic process"/>
    <property type="evidence" value="ECO:0007669"/>
    <property type="project" value="UniProtKB-KW"/>
</dbReference>
<dbReference type="GO" id="GO:0009073">
    <property type="term" value="P:aromatic amino acid family biosynthetic process"/>
    <property type="evidence" value="ECO:0007669"/>
    <property type="project" value="UniProtKB-KW"/>
</dbReference>
<dbReference type="GO" id="GO:0009423">
    <property type="term" value="P:chorismate biosynthetic process"/>
    <property type="evidence" value="ECO:0007669"/>
    <property type="project" value="UniProtKB-UniRule"/>
</dbReference>
<dbReference type="GO" id="GO:0019632">
    <property type="term" value="P:shikimate metabolic process"/>
    <property type="evidence" value="ECO:0007669"/>
    <property type="project" value="TreeGrafter"/>
</dbReference>
<dbReference type="CDD" id="cd01065">
    <property type="entry name" value="NAD_bind_Shikimate_DH"/>
    <property type="match status" value="1"/>
</dbReference>
<dbReference type="Gene3D" id="3.40.50.10860">
    <property type="entry name" value="Leucine Dehydrogenase, chain A, domain 1"/>
    <property type="match status" value="1"/>
</dbReference>
<dbReference type="Gene3D" id="3.40.50.720">
    <property type="entry name" value="NAD(P)-binding Rossmann-like Domain"/>
    <property type="match status" value="1"/>
</dbReference>
<dbReference type="HAMAP" id="MF_00222">
    <property type="entry name" value="Shikimate_DH_AroE"/>
    <property type="match status" value="1"/>
</dbReference>
<dbReference type="InterPro" id="IPR046346">
    <property type="entry name" value="Aminoacid_DH-like_N_sf"/>
</dbReference>
<dbReference type="InterPro" id="IPR036291">
    <property type="entry name" value="NAD(P)-bd_dom_sf"/>
</dbReference>
<dbReference type="InterPro" id="IPR013708">
    <property type="entry name" value="Shikimate_DH-bd_N"/>
</dbReference>
<dbReference type="InterPro" id="IPR022893">
    <property type="entry name" value="Shikimate_DH_fam"/>
</dbReference>
<dbReference type="InterPro" id="IPR006151">
    <property type="entry name" value="Shikm_DH/Glu-tRNA_Rdtase"/>
</dbReference>
<dbReference type="PANTHER" id="PTHR21089:SF1">
    <property type="entry name" value="BIFUNCTIONAL 3-DEHYDROQUINATE DEHYDRATASE_SHIKIMATE DEHYDROGENASE, CHLOROPLASTIC"/>
    <property type="match status" value="1"/>
</dbReference>
<dbReference type="PANTHER" id="PTHR21089">
    <property type="entry name" value="SHIKIMATE DEHYDROGENASE"/>
    <property type="match status" value="1"/>
</dbReference>
<dbReference type="Pfam" id="PF01488">
    <property type="entry name" value="Shikimate_DH"/>
    <property type="match status" value="1"/>
</dbReference>
<dbReference type="Pfam" id="PF08501">
    <property type="entry name" value="Shikimate_dh_N"/>
    <property type="match status" value="1"/>
</dbReference>
<dbReference type="SUPFAM" id="SSF53223">
    <property type="entry name" value="Aminoacid dehydrogenase-like, N-terminal domain"/>
    <property type="match status" value="1"/>
</dbReference>
<dbReference type="SUPFAM" id="SSF51735">
    <property type="entry name" value="NAD(P)-binding Rossmann-fold domains"/>
    <property type="match status" value="1"/>
</dbReference>
<proteinExistence type="inferred from homology"/>
<accession>C3MXK7</accession>
<feature type="chain" id="PRO_1000204280" description="Shikimate dehydrogenase (NADP(+))">
    <location>
        <begin position="1"/>
        <end position="269"/>
    </location>
</feature>
<feature type="active site" description="Proton acceptor" evidence="1">
    <location>
        <position position="72"/>
    </location>
</feature>
<feature type="binding site" evidence="1">
    <location>
        <begin position="22"/>
        <end position="24"/>
    </location>
    <ligand>
        <name>shikimate</name>
        <dbReference type="ChEBI" id="CHEBI:36208"/>
    </ligand>
</feature>
<feature type="binding site" evidence="1">
    <location>
        <position position="68"/>
    </location>
    <ligand>
        <name>shikimate</name>
        <dbReference type="ChEBI" id="CHEBI:36208"/>
    </ligand>
</feature>
<feature type="binding site" evidence="1">
    <location>
        <position position="93"/>
    </location>
    <ligand>
        <name>shikimate</name>
        <dbReference type="ChEBI" id="CHEBI:36208"/>
    </ligand>
</feature>
<feature type="binding site" evidence="1">
    <location>
        <position position="104"/>
    </location>
    <ligand>
        <name>shikimate</name>
        <dbReference type="ChEBI" id="CHEBI:36208"/>
    </ligand>
</feature>
<feature type="binding site" evidence="1">
    <location>
        <begin position="128"/>
        <end position="132"/>
    </location>
    <ligand>
        <name>NADP(+)</name>
        <dbReference type="ChEBI" id="CHEBI:58349"/>
    </ligand>
</feature>
<feature type="binding site" evidence="1">
    <location>
        <begin position="152"/>
        <end position="157"/>
    </location>
    <ligand>
        <name>NADP(+)</name>
        <dbReference type="ChEBI" id="CHEBI:58349"/>
    </ligand>
</feature>
<feature type="binding site" evidence="1">
    <location>
        <position position="210"/>
    </location>
    <ligand>
        <name>NADP(+)</name>
        <dbReference type="ChEBI" id="CHEBI:58349"/>
    </ligand>
</feature>
<feature type="binding site" evidence="1">
    <location>
        <position position="212"/>
    </location>
    <ligand>
        <name>shikimate</name>
        <dbReference type="ChEBI" id="CHEBI:36208"/>
    </ligand>
</feature>
<feature type="binding site" evidence="1">
    <location>
        <position position="233"/>
    </location>
    <ligand>
        <name>NADP(+)</name>
        <dbReference type="ChEBI" id="CHEBI:58349"/>
    </ligand>
</feature>
<comment type="function">
    <text evidence="1">Involved in the biosynthesis of the chorismate, which leads to the biosynthesis of aromatic amino acids. Catalyzes the reversible NADPH linked reduction of 3-dehydroshikimate (DHSA) to yield shikimate (SA).</text>
</comment>
<comment type="catalytic activity">
    <reaction evidence="1">
        <text>shikimate + NADP(+) = 3-dehydroshikimate + NADPH + H(+)</text>
        <dbReference type="Rhea" id="RHEA:17737"/>
        <dbReference type="ChEBI" id="CHEBI:15378"/>
        <dbReference type="ChEBI" id="CHEBI:16630"/>
        <dbReference type="ChEBI" id="CHEBI:36208"/>
        <dbReference type="ChEBI" id="CHEBI:57783"/>
        <dbReference type="ChEBI" id="CHEBI:58349"/>
        <dbReference type="EC" id="1.1.1.25"/>
    </reaction>
</comment>
<comment type="pathway">
    <text evidence="1">Metabolic intermediate biosynthesis; chorismate biosynthesis; chorismate from D-erythrose 4-phosphate and phosphoenolpyruvate: step 4/7.</text>
</comment>
<comment type="subunit">
    <text evidence="1">Homodimer.</text>
</comment>
<comment type="similarity">
    <text evidence="1">Belongs to the shikimate dehydrogenase family.</text>
</comment>
<evidence type="ECO:0000255" key="1">
    <source>
        <dbReference type="HAMAP-Rule" id="MF_00222"/>
    </source>
</evidence>
<gene>
    <name evidence="1" type="primary">aroE</name>
    <name type="ordered locus">M1425_1796</name>
</gene>
<organism>
    <name type="scientific">Saccharolobus islandicus (strain M.14.25 / Kamchatka #1)</name>
    <name type="common">Sulfolobus islandicus</name>
    <dbReference type="NCBI Taxonomy" id="427317"/>
    <lineage>
        <taxon>Archaea</taxon>
        <taxon>Thermoproteota</taxon>
        <taxon>Thermoprotei</taxon>
        <taxon>Sulfolobales</taxon>
        <taxon>Sulfolobaceae</taxon>
        <taxon>Saccharolobus</taxon>
    </lineage>
</organism>
<sequence length="269" mass="30378">MLEEINYDTKLFGLIGKNIKYTLSPYIHNFSFTTLGINAVYLVFDLDEMKFNRIINGLLEIAEGLNVTIPYKEEVMKYLDNTDTYSTRIQAVNTIYKKSGYNTDYLAIKNLVRKKIGNMSGYECYVYGAGGAAKAAAFALSELGCSSISIVNRTNLRANELVELLNKNGYNASIKENCNSTSNIVVVNSTPNPSVVPENCIQKSELVIEFVYKPVETELIKNAKKYGIKYIDGLEILVNQAVEAEKIWFNKSVSDEKIIEYLYARKLVW</sequence>
<name>AROE_SACI4</name>
<protein>
    <recommendedName>
        <fullName evidence="1">Shikimate dehydrogenase (NADP(+))</fullName>
        <shortName evidence="1">SDH</shortName>
        <ecNumber evidence="1">1.1.1.25</ecNumber>
    </recommendedName>
</protein>
<reference key="1">
    <citation type="journal article" date="2009" name="Proc. Natl. Acad. Sci. U.S.A.">
        <title>Biogeography of the Sulfolobus islandicus pan-genome.</title>
        <authorList>
            <person name="Reno M.L."/>
            <person name="Held N.L."/>
            <person name="Fields C.J."/>
            <person name="Burke P.V."/>
            <person name="Whitaker R.J."/>
        </authorList>
    </citation>
    <scope>NUCLEOTIDE SEQUENCE [LARGE SCALE GENOMIC DNA]</scope>
    <source>
        <strain>M.14.25 / Kamchatka #1</strain>
    </source>
</reference>
<keyword id="KW-0028">Amino-acid biosynthesis</keyword>
<keyword id="KW-0057">Aromatic amino acid biosynthesis</keyword>
<keyword id="KW-0521">NADP</keyword>
<keyword id="KW-0560">Oxidoreductase</keyword>